<reference key="1">
    <citation type="submission" date="1999-12" db="EMBL/GenBank/DDBJ databases">
        <title>Hup gene cluster from Rhodobacter sphaeroides.</title>
        <authorList>
            <person name="Colbeau A."/>
            <person name="Chabert J."/>
            <person name="Wu J.-Q."/>
            <person name="Vignais P.M."/>
        </authorList>
    </citation>
    <scope>NUCLEOTIDE SEQUENCE [GENOMIC DNA]</scope>
    <source>
        <strain>601</strain>
    </source>
</reference>
<reference key="2">
    <citation type="submission" date="2001-06" db="EMBL/GenBank/DDBJ databases">
        <title>Cloning of the hup gene cluster from Rhodobacter sphaeroides 601.</title>
        <authorList>
            <person name="Xu D.Q."/>
            <person name="Wu Y.Q."/>
        </authorList>
    </citation>
    <scope>NUCLEOTIDE SEQUENCE [GENOMIC DNA]</scope>
    <source>
        <strain>601</strain>
    </source>
</reference>
<protein>
    <recommendedName>
        <fullName evidence="1">Hydrogenase maturation factor HypA</fullName>
    </recommendedName>
</protein>
<evidence type="ECO:0000255" key="1">
    <source>
        <dbReference type="HAMAP-Rule" id="MF_00213"/>
    </source>
</evidence>
<evidence type="ECO:0000305" key="2"/>
<dbReference type="EMBL" id="AF214145">
    <property type="protein sequence ID" value="AAF19997.1"/>
    <property type="molecule type" value="Genomic_DNA"/>
</dbReference>
<dbReference type="EMBL" id="AJ315650">
    <property type="protein sequence ID" value="CAC42236.1"/>
    <property type="molecule type" value="Genomic_DNA"/>
</dbReference>
<dbReference type="RefSeq" id="WP_119004407.1">
    <property type="nucleotide sequence ID" value="NZ_QXDK01000012.1"/>
</dbReference>
<dbReference type="SMR" id="Q9REM0"/>
<dbReference type="GO" id="GO:0016151">
    <property type="term" value="F:nickel cation binding"/>
    <property type="evidence" value="ECO:0007669"/>
    <property type="project" value="UniProtKB-UniRule"/>
</dbReference>
<dbReference type="GO" id="GO:0008270">
    <property type="term" value="F:zinc ion binding"/>
    <property type="evidence" value="ECO:0007669"/>
    <property type="project" value="UniProtKB-UniRule"/>
</dbReference>
<dbReference type="GO" id="GO:0051604">
    <property type="term" value="P:protein maturation"/>
    <property type="evidence" value="ECO:0007669"/>
    <property type="project" value="InterPro"/>
</dbReference>
<dbReference type="GO" id="GO:0036211">
    <property type="term" value="P:protein modification process"/>
    <property type="evidence" value="ECO:0007669"/>
    <property type="project" value="UniProtKB-UniRule"/>
</dbReference>
<dbReference type="Gene3D" id="3.30.2320.80">
    <property type="match status" value="1"/>
</dbReference>
<dbReference type="HAMAP" id="MF_00213">
    <property type="entry name" value="HypA_HybF"/>
    <property type="match status" value="1"/>
</dbReference>
<dbReference type="InterPro" id="IPR020538">
    <property type="entry name" value="Hydgase_Ni_incorp_HypA/HybF_CS"/>
</dbReference>
<dbReference type="InterPro" id="IPR000688">
    <property type="entry name" value="HypA/HybF"/>
</dbReference>
<dbReference type="NCBIfam" id="TIGR00100">
    <property type="entry name" value="hypA"/>
    <property type="match status" value="1"/>
</dbReference>
<dbReference type="PANTHER" id="PTHR34535">
    <property type="entry name" value="HYDROGENASE MATURATION FACTOR HYPA"/>
    <property type="match status" value="1"/>
</dbReference>
<dbReference type="PANTHER" id="PTHR34535:SF3">
    <property type="entry name" value="HYDROGENASE MATURATION FACTOR HYPA"/>
    <property type="match status" value="1"/>
</dbReference>
<dbReference type="Pfam" id="PF01155">
    <property type="entry name" value="HypA"/>
    <property type="match status" value="1"/>
</dbReference>
<dbReference type="PIRSF" id="PIRSF004761">
    <property type="entry name" value="Hydrgn_mat_HypA"/>
    <property type="match status" value="1"/>
</dbReference>
<dbReference type="PROSITE" id="PS01249">
    <property type="entry name" value="HYPA"/>
    <property type="match status" value="1"/>
</dbReference>
<comment type="function">
    <text evidence="1">Involved in the maturation of [NiFe] hydrogenases. Required for nickel insertion into the metal center of the hydrogenase.</text>
</comment>
<comment type="similarity">
    <text evidence="1 2">Belongs to the HypA/HybF family.</text>
</comment>
<sequence>MHEMSLCEGIRGIVEDQARRHGFATVKVLRLEIGRFAGVEKAALGFAFDVVMRGSAAEGARLEILELPGRALCYDCGEEAAIQDRFDPCPLCGGGRLMPVGGDEMRIKDMEVQ</sequence>
<name>HYPA_CERSP</name>
<gene>
    <name evidence="1" type="primary">hypA</name>
</gene>
<proteinExistence type="inferred from homology"/>
<keyword id="KW-0479">Metal-binding</keyword>
<keyword id="KW-0533">Nickel</keyword>
<keyword id="KW-0862">Zinc</keyword>
<accession>Q9REM0</accession>
<feature type="chain" id="PRO_0000129048" description="Hydrogenase maturation factor HypA">
    <location>
        <begin position="1"/>
        <end position="113"/>
    </location>
</feature>
<feature type="binding site" evidence="1">
    <location>
        <position position="2"/>
    </location>
    <ligand>
        <name>Ni(2+)</name>
        <dbReference type="ChEBI" id="CHEBI:49786"/>
    </ligand>
</feature>
<feature type="binding site" evidence="1">
    <location>
        <position position="73"/>
    </location>
    <ligand>
        <name>Zn(2+)</name>
        <dbReference type="ChEBI" id="CHEBI:29105"/>
    </ligand>
</feature>
<feature type="binding site" evidence="1">
    <location>
        <position position="76"/>
    </location>
    <ligand>
        <name>Zn(2+)</name>
        <dbReference type="ChEBI" id="CHEBI:29105"/>
    </ligand>
</feature>
<feature type="binding site" evidence="1">
    <location>
        <position position="89"/>
    </location>
    <ligand>
        <name>Zn(2+)</name>
        <dbReference type="ChEBI" id="CHEBI:29105"/>
    </ligand>
</feature>
<feature type="binding site" evidence="1">
    <location>
        <position position="92"/>
    </location>
    <ligand>
        <name>Zn(2+)</name>
        <dbReference type="ChEBI" id="CHEBI:29105"/>
    </ligand>
</feature>
<organism>
    <name type="scientific">Cereibacter sphaeroides</name>
    <name type="common">Rhodobacter sphaeroides</name>
    <dbReference type="NCBI Taxonomy" id="1063"/>
    <lineage>
        <taxon>Bacteria</taxon>
        <taxon>Pseudomonadati</taxon>
        <taxon>Pseudomonadota</taxon>
        <taxon>Alphaproteobacteria</taxon>
        <taxon>Rhodobacterales</taxon>
        <taxon>Paracoccaceae</taxon>
        <taxon>Cereibacter</taxon>
    </lineage>
</organism>